<accession>P94371</accession>
<dbReference type="EMBL" id="D83026">
    <property type="protein sequence ID" value="BAA11734.1"/>
    <property type="molecule type" value="Genomic_DNA"/>
</dbReference>
<dbReference type="EMBL" id="AL009126">
    <property type="protein sequence ID" value="CAB15895.1"/>
    <property type="molecule type" value="Genomic_DNA"/>
</dbReference>
<dbReference type="PIR" id="F70081">
    <property type="entry name" value="F70081"/>
</dbReference>
<dbReference type="RefSeq" id="NP_391748.1">
    <property type="nucleotide sequence ID" value="NC_000964.3"/>
</dbReference>
<dbReference type="RefSeq" id="WP_003227289.1">
    <property type="nucleotide sequence ID" value="NZ_OZ025638.1"/>
</dbReference>
<dbReference type="SMR" id="P94371"/>
<dbReference type="FunCoup" id="P94371">
    <property type="interactions" value="28"/>
</dbReference>
<dbReference type="IntAct" id="P94371">
    <property type="interactions" value="1"/>
</dbReference>
<dbReference type="STRING" id="224308.BSU38690"/>
<dbReference type="PaxDb" id="224308-BSU38690"/>
<dbReference type="EnsemblBacteria" id="CAB15895">
    <property type="protein sequence ID" value="CAB15895"/>
    <property type="gene ID" value="BSU_38690"/>
</dbReference>
<dbReference type="GeneID" id="938082"/>
<dbReference type="KEGG" id="bsu:BSU38690"/>
<dbReference type="PATRIC" id="fig|224308.179.peg.4188"/>
<dbReference type="eggNOG" id="ENOG502ZSRV">
    <property type="taxonomic scope" value="Bacteria"/>
</dbReference>
<dbReference type="InParanoid" id="P94371"/>
<dbReference type="OrthoDB" id="2924679at2"/>
<dbReference type="BioCyc" id="BSUB:BSU38690-MONOMER"/>
<dbReference type="Proteomes" id="UP000001570">
    <property type="component" value="Chromosome"/>
</dbReference>
<dbReference type="GO" id="GO:0005886">
    <property type="term" value="C:plasma membrane"/>
    <property type="evidence" value="ECO:0007669"/>
    <property type="project" value="UniProtKB-SubCell"/>
</dbReference>
<dbReference type="InterPro" id="IPR035238">
    <property type="entry name" value="DUF5345"/>
</dbReference>
<dbReference type="Pfam" id="PF17280">
    <property type="entry name" value="DUF5345"/>
    <property type="match status" value="1"/>
</dbReference>
<gene>
    <name type="primary">yxlC</name>
    <name type="ordered locus">BSU38690</name>
</gene>
<keyword id="KW-1003">Cell membrane</keyword>
<keyword id="KW-0472">Membrane</keyword>
<keyword id="KW-1185">Reference proteome</keyword>
<keyword id="KW-0812">Transmembrane</keyword>
<keyword id="KW-1133">Transmembrane helix</keyword>
<reference key="1">
    <citation type="journal article" date="1996" name="Microbiology">
        <title>Sequencing of a 65 kb region of the Bacillus subtilis genome containing the lic and cel loci, and creation of a 177 kb contig covering the gnt-sacXY region.</title>
        <authorList>
            <person name="Yoshida K."/>
            <person name="Shindo K."/>
            <person name="Sano H."/>
            <person name="Seki S."/>
            <person name="Fujimura M."/>
            <person name="Yanai N."/>
            <person name="Miwa Y."/>
            <person name="Fujita Y."/>
        </authorList>
    </citation>
    <scope>NUCLEOTIDE SEQUENCE [GENOMIC DNA]</scope>
    <source>
        <strain>168 / BGSC1A1</strain>
    </source>
</reference>
<reference key="2">
    <citation type="journal article" date="1997" name="Nature">
        <title>The complete genome sequence of the Gram-positive bacterium Bacillus subtilis.</title>
        <authorList>
            <person name="Kunst F."/>
            <person name="Ogasawara N."/>
            <person name="Moszer I."/>
            <person name="Albertini A.M."/>
            <person name="Alloni G."/>
            <person name="Azevedo V."/>
            <person name="Bertero M.G."/>
            <person name="Bessieres P."/>
            <person name="Bolotin A."/>
            <person name="Borchert S."/>
            <person name="Borriss R."/>
            <person name="Boursier L."/>
            <person name="Brans A."/>
            <person name="Braun M."/>
            <person name="Brignell S.C."/>
            <person name="Bron S."/>
            <person name="Brouillet S."/>
            <person name="Bruschi C.V."/>
            <person name="Caldwell B."/>
            <person name="Capuano V."/>
            <person name="Carter N.M."/>
            <person name="Choi S.-K."/>
            <person name="Codani J.-J."/>
            <person name="Connerton I.F."/>
            <person name="Cummings N.J."/>
            <person name="Daniel R.A."/>
            <person name="Denizot F."/>
            <person name="Devine K.M."/>
            <person name="Duesterhoeft A."/>
            <person name="Ehrlich S.D."/>
            <person name="Emmerson P.T."/>
            <person name="Entian K.-D."/>
            <person name="Errington J."/>
            <person name="Fabret C."/>
            <person name="Ferrari E."/>
            <person name="Foulger D."/>
            <person name="Fritz C."/>
            <person name="Fujita M."/>
            <person name="Fujita Y."/>
            <person name="Fuma S."/>
            <person name="Galizzi A."/>
            <person name="Galleron N."/>
            <person name="Ghim S.-Y."/>
            <person name="Glaser P."/>
            <person name="Goffeau A."/>
            <person name="Golightly E.J."/>
            <person name="Grandi G."/>
            <person name="Guiseppi G."/>
            <person name="Guy B.J."/>
            <person name="Haga K."/>
            <person name="Haiech J."/>
            <person name="Harwood C.R."/>
            <person name="Henaut A."/>
            <person name="Hilbert H."/>
            <person name="Holsappel S."/>
            <person name="Hosono S."/>
            <person name="Hullo M.-F."/>
            <person name="Itaya M."/>
            <person name="Jones L.-M."/>
            <person name="Joris B."/>
            <person name="Karamata D."/>
            <person name="Kasahara Y."/>
            <person name="Klaerr-Blanchard M."/>
            <person name="Klein C."/>
            <person name="Kobayashi Y."/>
            <person name="Koetter P."/>
            <person name="Koningstein G."/>
            <person name="Krogh S."/>
            <person name="Kumano M."/>
            <person name="Kurita K."/>
            <person name="Lapidus A."/>
            <person name="Lardinois S."/>
            <person name="Lauber J."/>
            <person name="Lazarevic V."/>
            <person name="Lee S.-M."/>
            <person name="Levine A."/>
            <person name="Liu H."/>
            <person name="Masuda S."/>
            <person name="Mauel C."/>
            <person name="Medigue C."/>
            <person name="Medina N."/>
            <person name="Mellado R.P."/>
            <person name="Mizuno M."/>
            <person name="Moestl D."/>
            <person name="Nakai S."/>
            <person name="Noback M."/>
            <person name="Noone D."/>
            <person name="O'Reilly M."/>
            <person name="Ogawa K."/>
            <person name="Ogiwara A."/>
            <person name="Oudega B."/>
            <person name="Park S.-H."/>
            <person name="Parro V."/>
            <person name="Pohl T.M."/>
            <person name="Portetelle D."/>
            <person name="Porwollik S."/>
            <person name="Prescott A.M."/>
            <person name="Presecan E."/>
            <person name="Pujic P."/>
            <person name="Purnelle B."/>
            <person name="Rapoport G."/>
            <person name="Rey M."/>
            <person name="Reynolds S."/>
            <person name="Rieger M."/>
            <person name="Rivolta C."/>
            <person name="Rocha E."/>
            <person name="Roche B."/>
            <person name="Rose M."/>
            <person name="Sadaie Y."/>
            <person name="Sato T."/>
            <person name="Scanlan E."/>
            <person name="Schleich S."/>
            <person name="Schroeter R."/>
            <person name="Scoffone F."/>
            <person name="Sekiguchi J."/>
            <person name="Sekowska A."/>
            <person name="Seror S.J."/>
            <person name="Serror P."/>
            <person name="Shin B.-S."/>
            <person name="Soldo B."/>
            <person name="Sorokin A."/>
            <person name="Tacconi E."/>
            <person name="Takagi T."/>
            <person name="Takahashi H."/>
            <person name="Takemaru K."/>
            <person name="Takeuchi M."/>
            <person name="Tamakoshi A."/>
            <person name="Tanaka T."/>
            <person name="Terpstra P."/>
            <person name="Tognoni A."/>
            <person name="Tosato V."/>
            <person name="Uchiyama S."/>
            <person name="Vandenbol M."/>
            <person name="Vannier F."/>
            <person name="Vassarotti A."/>
            <person name="Viari A."/>
            <person name="Wambutt R."/>
            <person name="Wedler E."/>
            <person name="Wedler H."/>
            <person name="Weitzenegger T."/>
            <person name="Winters P."/>
            <person name="Wipat A."/>
            <person name="Yamamoto H."/>
            <person name="Yamane K."/>
            <person name="Yasumoto K."/>
            <person name="Yata K."/>
            <person name="Yoshida K."/>
            <person name="Yoshikawa H.-F."/>
            <person name="Zumstein E."/>
            <person name="Yoshikawa H."/>
            <person name="Danchin A."/>
        </authorList>
    </citation>
    <scope>NUCLEOTIDE SEQUENCE [LARGE SCALE GENOMIC DNA]</scope>
    <source>
        <strain>168</strain>
    </source>
</reference>
<reference key="3">
    <citation type="journal article" date="2003" name="J. Biochem.">
        <title>Organization and expression of the Bacillus subtilis sigY operon.</title>
        <authorList>
            <person name="Tojo S."/>
            <person name="Matsunaga M."/>
            <person name="Matsumoto T."/>
            <person name="Kang C.-M."/>
            <person name="Yamaguchi H."/>
            <person name="Asai K."/>
            <person name="Sadaie Y."/>
            <person name="Yoshida K."/>
            <person name="Fujita Y."/>
        </authorList>
    </citation>
    <scope>INDUCTION</scope>
    <source>
        <strain>168</strain>
    </source>
</reference>
<protein>
    <recommendedName>
        <fullName>Uncharacterized protein YxlC</fullName>
    </recommendedName>
</protein>
<proteinExistence type="evidence at transcript level"/>
<evidence type="ECO:0000255" key="1"/>
<evidence type="ECO:0000269" key="2">
    <source>
    </source>
</evidence>
<evidence type="ECO:0000305" key="3"/>
<organism>
    <name type="scientific">Bacillus subtilis (strain 168)</name>
    <dbReference type="NCBI Taxonomy" id="224308"/>
    <lineage>
        <taxon>Bacteria</taxon>
        <taxon>Bacillati</taxon>
        <taxon>Bacillota</taxon>
        <taxon>Bacilli</taxon>
        <taxon>Bacillales</taxon>
        <taxon>Bacillaceae</taxon>
        <taxon>Bacillus</taxon>
    </lineage>
</organism>
<feature type="chain" id="PRO_0000050040" description="Uncharacterized protein YxlC">
    <location>
        <begin position="1"/>
        <end position="106"/>
    </location>
</feature>
<feature type="transmembrane region" description="Helical" evidence="1">
    <location>
        <begin position="46"/>
        <end position="68"/>
    </location>
</feature>
<feature type="transmembrane region" description="Helical" evidence="1">
    <location>
        <begin position="73"/>
        <end position="92"/>
    </location>
</feature>
<comment type="subcellular location">
    <subcellularLocation>
        <location evidence="3">Cell membrane</location>
        <topology evidence="3">Multi-pass membrane protein</topology>
    </subcellularLocation>
</comment>
<comment type="induction">
    <text evidence="2">Expression is sigma Y-dependent. Induced upon nitrogen starvation.</text>
</comment>
<name>YXLC_BACSU</name>
<sequence>MNKEKLSDHLKSEWKKIDQTANPSIPNQKELLHQLSQMKAEYRKKLLQEIILFVFCALMVVSAAILAFTQAPAVFIVLQVCVLAVLPILIAAEKKRHLGECEVKRG</sequence>